<dbReference type="EMBL" id="AE005174">
    <property type="protein sequence ID" value="AAG58322.1"/>
    <property type="molecule type" value="Genomic_DNA"/>
</dbReference>
<dbReference type="EMBL" id="BA000007">
    <property type="protein sequence ID" value="BAB37490.1"/>
    <property type="molecule type" value="Genomic_DNA"/>
</dbReference>
<dbReference type="PIR" id="C91137">
    <property type="entry name" value="C91137"/>
</dbReference>
<dbReference type="PIR" id="F85982">
    <property type="entry name" value="F85982"/>
</dbReference>
<dbReference type="RefSeq" id="NP_312094.1">
    <property type="nucleotide sequence ID" value="NC_002695.1"/>
</dbReference>
<dbReference type="RefSeq" id="WP_000445413.1">
    <property type="nucleotide sequence ID" value="NZ_VOAI01000014.1"/>
</dbReference>
<dbReference type="SMR" id="P0ACH3"/>
<dbReference type="STRING" id="155864.Z4551"/>
<dbReference type="GeneID" id="916088"/>
<dbReference type="GeneID" id="93778793"/>
<dbReference type="KEGG" id="ece:Z4551"/>
<dbReference type="KEGG" id="ecs:ECs_4067"/>
<dbReference type="PATRIC" id="fig|386585.9.peg.4246"/>
<dbReference type="eggNOG" id="COG3423">
    <property type="taxonomic scope" value="Bacteria"/>
</dbReference>
<dbReference type="HOGENOM" id="CLU_162005_0_1_6"/>
<dbReference type="OMA" id="YHDPITH"/>
<dbReference type="Proteomes" id="UP000000558">
    <property type="component" value="Chromosome"/>
</dbReference>
<dbReference type="Proteomes" id="UP000002519">
    <property type="component" value="Chromosome"/>
</dbReference>
<dbReference type="GO" id="GO:0003677">
    <property type="term" value="F:DNA binding"/>
    <property type="evidence" value="ECO:0007669"/>
    <property type="project" value="UniProtKB-KW"/>
</dbReference>
<dbReference type="FunFam" id="1.10.260.40:FF:000017">
    <property type="entry name" value="DNA-binding transcriptional regulator SfsB"/>
    <property type="match status" value="1"/>
</dbReference>
<dbReference type="Gene3D" id="1.10.260.40">
    <property type="entry name" value="lambda repressor-like DNA-binding domains"/>
    <property type="match status" value="1"/>
</dbReference>
<dbReference type="InterPro" id="IPR010982">
    <property type="entry name" value="Lambda_DNA-bd_dom_sf"/>
</dbReference>
<dbReference type="InterPro" id="IPR038722">
    <property type="entry name" value="Ner_HTH_dom"/>
</dbReference>
<dbReference type="NCBIfam" id="NF007670">
    <property type="entry name" value="PRK10344.1"/>
    <property type="match status" value="1"/>
</dbReference>
<dbReference type="Pfam" id="PF13693">
    <property type="entry name" value="HTH_35"/>
    <property type="match status" value="1"/>
</dbReference>
<dbReference type="SUPFAM" id="SSF47413">
    <property type="entry name" value="lambda repressor-like DNA-binding domains"/>
    <property type="match status" value="1"/>
</dbReference>
<organism>
    <name type="scientific">Escherichia coli O157:H7</name>
    <dbReference type="NCBI Taxonomy" id="83334"/>
    <lineage>
        <taxon>Bacteria</taxon>
        <taxon>Pseudomonadati</taxon>
        <taxon>Pseudomonadota</taxon>
        <taxon>Gammaproteobacteria</taxon>
        <taxon>Enterobacterales</taxon>
        <taxon>Enterobacteriaceae</taxon>
        <taxon>Escherichia</taxon>
    </lineage>
</organism>
<sequence>MESNFIDWHPADIIAGLRKKGTSMAAESRRNGLSSSTLANALSRPWPKGEMIIAKALGTDPWVIWPSRYHDPQTHEFIDRTQLMRSYTKPKK</sequence>
<reference key="1">
    <citation type="journal article" date="2001" name="Nature">
        <title>Genome sequence of enterohaemorrhagic Escherichia coli O157:H7.</title>
        <authorList>
            <person name="Perna N.T."/>
            <person name="Plunkett G. III"/>
            <person name="Burland V."/>
            <person name="Mau B."/>
            <person name="Glasner J.D."/>
            <person name="Rose D.J."/>
            <person name="Mayhew G.F."/>
            <person name="Evans P.S."/>
            <person name="Gregor J."/>
            <person name="Kirkpatrick H.A."/>
            <person name="Posfai G."/>
            <person name="Hackett J."/>
            <person name="Klink S."/>
            <person name="Boutin A."/>
            <person name="Shao Y."/>
            <person name="Miller L."/>
            <person name="Grotbeck E.J."/>
            <person name="Davis N.W."/>
            <person name="Lim A."/>
            <person name="Dimalanta E.T."/>
            <person name="Potamousis K."/>
            <person name="Apodaca J."/>
            <person name="Anantharaman T.S."/>
            <person name="Lin J."/>
            <person name="Yen G."/>
            <person name="Schwartz D.C."/>
            <person name="Welch R.A."/>
            <person name="Blattner F.R."/>
        </authorList>
    </citation>
    <scope>NUCLEOTIDE SEQUENCE [LARGE SCALE GENOMIC DNA]</scope>
    <source>
        <strain>O157:H7 / EDL933 / ATCC 700927 / EHEC</strain>
    </source>
</reference>
<reference key="2">
    <citation type="journal article" date="2001" name="DNA Res.">
        <title>Complete genome sequence of enterohemorrhagic Escherichia coli O157:H7 and genomic comparison with a laboratory strain K-12.</title>
        <authorList>
            <person name="Hayashi T."/>
            <person name="Makino K."/>
            <person name="Ohnishi M."/>
            <person name="Kurokawa K."/>
            <person name="Ishii K."/>
            <person name="Yokoyama K."/>
            <person name="Han C.-G."/>
            <person name="Ohtsubo E."/>
            <person name="Nakayama K."/>
            <person name="Murata T."/>
            <person name="Tanaka M."/>
            <person name="Tobe T."/>
            <person name="Iida T."/>
            <person name="Takami H."/>
            <person name="Honda T."/>
            <person name="Sasakawa C."/>
            <person name="Ogasawara N."/>
            <person name="Yasunaga T."/>
            <person name="Kuhara S."/>
            <person name="Shiba T."/>
            <person name="Hattori M."/>
            <person name="Shinagawa H."/>
        </authorList>
    </citation>
    <scope>NUCLEOTIDE SEQUENCE [LARGE SCALE GENOMIC DNA]</scope>
    <source>
        <strain>O157:H7 / Sakai / RIMD 0509952 / EHEC</strain>
    </source>
</reference>
<feature type="chain" id="PRO_0000062780" description="Sugar fermentation stimulation protein B">
    <location>
        <begin position="1"/>
        <end position="92"/>
    </location>
</feature>
<feature type="DNA-binding region" description="H-T-H motif" evidence="1">
    <location>
        <begin position="50"/>
        <end position="69"/>
    </location>
</feature>
<feature type="sequence conflict" description="In Ref. 2; BAB37490." evidence="2" ref="2">
    <original>T</original>
    <variation>P</variation>
    <location>
        <position position="74"/>
    </location>
</feature>
<evidence type="ECO:0000250" key="1"/>
<evidence type="ECO:0000305" key="2"/>
<accession>P0ACH3</accession>
<accession>P18837</accession>
<protein>
    <recommendedName>
        <fullName>Sugar fermentation stimulation protein B</fullName>
    </recommendedName>
    <alternativeName>
        <fullName>Ner-like protein</fullName>
    </alternativeName>
</protein>
<gene>
    <name type="primary">sfsB</name>
    <name type="ordered locus">Z4551</name>
    <name type="ordered locus">ECs4067</name>
</gene>
<comment type="function">
    <text evidence="1">This protein is involved in positive regulation of the metabolism of sugars.</text>
</comment>
<comment type="similarity">
    <text evidence="2">Belongs to the ner transcriptional regulatory family.</text>
</comment>
<keyword id="KW-0010">Activator</keyword>
<keyword id="KW-0238">DNA-binding</keyword>
<keyword id="KW-1185">Reference proteome</keyword>
<keyword id="KW-0804">Transcription</keyword>
<keyword id="KW-0805">Transcription regulation</keyword>
<name>SFSB_ECO57</name>
<proteinExistence type="inferred from homology"/>